<reference key="1">
    <citation type="journal article" date="1998" name="Biochim. Biophys. Acta">
        <title>cDNA cloning and expression of a novel CYP3A from the Syrian hamster, CYP3A31.</title>
        <authorList>
            <person name="Alabouch S."/>
            <person name="Kurose K."/>
            <person name="Tohkin M."/>
            <person name="Bani M.-H."/>
            <person name="Fukuhara M."/>
            <person name="Nagata K."/>
            <person name="Yamazoe Y."/>
        </authorList>
    </citation>
    <scope>NUCLEOTIDE SEQUENCE [MRNA]</scope>
    <source>
        <tissue>Liver</tissue>
    </source>
</reference>
<protein>
    <recommendedName>
        <fullName>Cytochrome P450 3A31</fullName>
        <ecNumber>1.14.14.1</ecNumber>
    </recommendedName>
    <alternativeName>
        <fullName>CYPIIIA31</fullName>
    </alternativeName>
    <alternativeName>
        <fullName>Cytochrome P450 SH3A-1</fullName>
    </alternativeName>
</protein>
<accession>O70537</accession>
<gene>
    <name type="primary">CYP3A31</name>
</gene>
<sequence length="501" mass="57772">MDLTSVLSLETWVLLAISLVLLYRLGTHKYDIFKKQGIPGPKPLPFLGNVLNYYKGIWTFDIECHKKYGKIWGLFEGQRPLFTVTDTEMIKNVLVKECYSIFTNRRDFGPVGIMSKAVSISKDEEWKRIRALLSPTFTSGKLKEMFPIIEQYGDILVKFLRREAEKGNPVTTKEVFGAYSMDVITSTAFGVSVDSLNNPKDLLWKGRKLLRFDFFDPLFLSVVLFPFLIPIYEKLNVSMFPKDSISFFRKFVDKTKENRLDYNQKHRVDFLQLMMNSHDNSKDSHKALSDMEIIAQSIIFIFAGYDTTSSTLSFALYLLATHPDVQKKLQEEIDIALPNKARPSYDKVMEMEYLDMVLNETLRLYPIGSRLERVCKQDVEMDGVFVPKGSIVMVPVFALHYDPQYWPEPEKFRPERFSKENKGSIDPYIFLPFGNGPRNCIGMRFALMNMKLALTKVLQNFSLQPCKETQIPMKLSRKAMLQPEKPIILKVVPRDAIITGA</sequence>
<feature type="chain" id="PRO_0000051811" description="Cytochrome P450 3A31">
    <location>
        <begin position="1"/>
        <end position="501"/>
    </location>
</feature>
<feature type="binding site" description="axial binding residue" evidence="1">
    <location>
        <position position="440"/>
    </location>
    <ligand>
        <name>heme</name>
        <dbReference type="ChEBI" id="CHEBI:30413"/>
    </ligand>
    <ligandPart>
        <name>Fe</name>
        <dbReference type="ChEBI" id="CHEBI:18248"/>
    </ligandPart>
</feature>
<proteinExistence type="evidence at transcript level"/>
<organism>
    <name type="scientific">Mesocricetus auratus</name>
    <name type="common">Golden hamster</name>
    <dbReference type="NCBI Taxonomy" id="10036"/>
    <lineage>
        <taxon>Eukaryota</taxon>
        <taxon>Metazoa</taxon>
        <taxon>Chordata</taxon>
        <taxon>Craniata</taxon>
        <taxon>Vertebrata</taxon>
        <taxon>Euteleostomi</taxon>
        <taxon>Mammalia</taxon>
        <taxon>Eutheria</taxon>
        <taxon>Euarchontoglires</taxon>
        <taxon>Glires</taxon>
        <taxon>Rodentia</taxon>
        <taxon>Myomorpha</taxon>
        <taxon>Muroidea</taxon>
        <taxon>Cricetidae</taxon>
        <taxon>Cricetinae</taxon>
        <taxon>Mesocricetus</taxon>
    </lineage>
</organism>
<evidence type="ECO:0000250" key="1"/>
<evidence type="ECO:0000305" key="2"/>
<name>CP3AV_MESAU</name>
<comment type="function">
    <text>Cytochromes P450 are a group of heme-thiolate monooxygenases. In liver microsomes, this enzyme is involved in an NADPH-dependent electron transport pathway. It oxidizes a variety of structurally unrelated compounds, including steroids, fatty acids, and xenobiotics.</text>
</comment>
<comment type="catalytic activity">
    <reaction>
        <text>an organic molecule + reduced [NADPH--hemoprotein reductase] + O2 = an alcohol + oxidized [NADPH--hemoprotein reductase] + H2O + H(+)</text>
        <dbReference type="Rhea" id="RHEA:17149"/>
        <dbReference type="Rhea" id="RHEA-COMP:11964"/>
        <dbReference type="Rhea" id="RHEA-COMP:11965"/>
        <dbReference type="ChEBI" id="CHEBI:15377"/>
        <dbReference type="ChEBI" id="CHEBI:15378"/>
        <dbReference type="ChEBI" id="CHEBI:15379"/>
        <dbReference type="ChEBI" id="CHEBI:30879"/>
        <dbReference type="ChEBI" id="CHEBI:57618"/>
        <dbReference type="ChEBI" id="CHEBI:58210"/>
        <dbReference type="ChEBI" id="CHEBI:142491"/>
        <dbReference type="EC" id="1.14.14.1"/>
    </reaction>
</comment>
<comment type="cofactor">
    <cofactor evidence="1">
        <name>heme</name>
        <dbReference type="ChEBI" id="CHEBI:30413"/>
    </cofactor>
</comment>
<comment type="subcellular location">
    <subcellularLocation>
        <location>Endoplasmic reticulum membrane</location>
        <topology>Peripheral membrane protein</topology>
    </subcellularLocation>
    <subcellularLocation>
        <location>Microsome membrane</location>
        <topology>Peripheral membrane protein</topology>
    </subcellularLocation>
</comment>
<comment type="tissue specificity">
    <text>Expressed constitutively in liver.</text>
</comment>
<comment type="induction">
    <text>Induced by phenobarbital and repressed by 3-methylcholanthrene or dexamethasone.</text>
</comment>
<comment type="similarity">
    <text evidence="2">Belongs to the cytochrome P450 family.</text>
</comment>
<dbReference type="EC" id="1.14.14.1"/>
<dbReference type="EMBL" id="D86951">
    <property type="protein sequence ID" value="BAA25811.1"/>
    <property type="molecule type" value="mRNA"/>
</dbReference>
<dbReference type="RefSeq" id="NP_001268529.1">
    <property type="nucleotide sequence ID" value="NM_001281600.1"/>
</dbReference>
<dbReference type="SMR" id="O70537"/>
<dbReference type="STRING" id="10036.ENSMAUP00000013162"/>
<dbReference type="GeneID" id="101836914"/>
<dbReference type="KEGG" id="maua:101836914"/>
<dbReference type="eggNOG" id="KOG0158">
    <property type="taxonomic scope" value="Eukaryota"/>
</dbReference>
<dbReference type="OrthoDB" id="1470350at2759"/>
<dbReference type="Proteomes" id="UP000189706">
    <property type="component" value="Unplaced"/>
</dbReference>
<dbReference type="GO" id="GO:0005789">
    <property type="term" value="C:endoplasmic reticulum membrane"/>
    <property type="evidence" value="ECO:0007669"/>
    <property type="project" value="UniProtKB-SubCell"/>
</dbReference>
<dbReference type="GO" id="GO:0020037">
    <property type="term" value="F:heme binding"/>
    <property type="evidence" value="ECO:0007669"/>
    <property type="project" value="InterPro"/>
</dbReference>
<dbReference type="GO" id="GO:0005506">
    <property type="term" value="F:iron ion binding"/>
    <property type="evidence" value="ECO:0007669"/>
    <property type="project" value="InterPro"/>
</dbReference>
<dbReference type="GO" id="GO:0016712">
    <property type="term" value="F:oxidoreductase activity, acting on paired donors, with incorporation or reduction of molecular oxygen, reduced flavin or flavoprotein as one donor, and incorporation of one atom of oxygen"/>
    <property type="evidence" value="ECO:0007669"/>
    <property type="project" value="UniProtKB-EC"/>
</dbReference>
<dbReference type="GO" id="GO:0050649">
    <property type="term" value="F:testosterone 6-beta-hydroxylase activity"/>
    <property type="evidence" value="ECO:0007669"/>
    <property type="project" value="TreeGrafter"/>
</dbReference>
<dbReference type="GO" id="GO:0070989">
    <property type="term" value="P:oxidative demethylation"/>
    <property type="evidence" value="ECO:0007669"/>
    <property type="project" value="TreeGrafter"/>
</dbReference>
<dbReference type="GO" id="GO:0008202">
    <property type="term" value="P:steroid metabolic process"/>
    <property type="evidence" value="ECO:0007669"/>
    <property type="project" value="TreeGrafter"/>
</dbReference>
<dbReference type="CDD" id="cd20650">
    <property type="entry name" value="CYP3A"/>
    <property type="match status" value="1"/>
</dbReference>
<dbReference type="FunFam" id="1.10.630.10:FF:000096">
    <property type="entry name" value="Cytochrome P450 3A4"/>
    <property type="match status" value="1"/>
</dbReference>
<dbReference type="Gene3D" id="1.10.630.10">
    <property type="entry name" value="Cytochrome P450"/>
    <property type="match status" value="1"/>
</dbReference>
<dbReference type="InterPro" id="IPR001128">
    <property type="entry name" value="Cyt_P450"/>
</dbReference>
<dbReference type="InterPro" id="IPR017972">
    <property type="entry name" value="Cyt_P450_CS"/>
</dbReference>
<dbReference type="InterPro" id="IPR008072">
    <property type="entry name" value="Cyt_P450_E_CYP3A"/>
</dbReference>
<dbReference type="InterPro" id="IPR002402">
    <property type="entry name" value="Cyt_P450_E_grp-II"/>
</dbReference>
<dbReference type="InterPro" id="IPR036396">
    <property type="entry name" value="Cyt_P450_sf"/>
</dbReference>
<dbReference type="InterPro" id="IPR050705">
    <property type="entry name" value="Cytochrome_P450_3A"/>
</dbReference>
<dbReference type="PANTHER" id="PTHR24302:SF49">
    <property type="entry name" value="CYTOCHROME P450 3A-RELATED"/>
    <property type="match status" value="1"/>
</dbReference>
<dbReference type="PANTHER" id="PTHR24302">
    <property type="entry name" value="CYTOCHROME P450 FAMILY 3"/>
    <property type="match status" value="1"/>
</dbReference>
<dbReference type="Pfam" id="PF00067">
    <property type="entry name" value="p450"/>
    <property type="match status" value="1"/>
</dbReference>
<dbReference type="PRINTS" id="PR00464">
    <property type="entry name" value="EP450II"/>
</dbReference>
<dbReference type="PRINTS" id="PR01689">
    <property type="entry name" value="EP450IICYP3A"/>
</dbReference>
<dbReference type="PRINTS" id="PR00385">
    <property type="entry name" value="P450"/>
</dbReference>
<dbReference type="SUPFAM" id="SSF48264">
    <property type="entry name" value="Cytochrome P450"/>
    <property type="match status" value="1"/>
</dbReference>
<dbReference type="PROSITE" id="PS00086">
    <property type="entry name" value="CYTOCHROME_P450"/>
    <property type="match status" value="1"/>
</dbReference>
<keyword id="KW-0256">Endoplasmic reticulum</keyword>
<keyword id="KW-0349">Heme</keyword>
<keyword id="KW-0408">Iron</keyword>
<keyword id="KW-0472">Membrane</keyword>
<keyword id="KW-0479">Metal-binding</keyword>
<keyword id="KW-0492">Microsome</keyword>
<keyword id="KW-0503">Monooxygenase</keyword>
<keyword id="KW-0560">Oxidoreductase</keyword>
<keyword id="KW-1185">Reference proteome</keyword>